<proteinExistence type="inferred from homology"/>
<reference key="1">
    <citation type="journal article" date="2007" name="BMC Microbiol.">
        <title>Subtle genetic changes enhance virulence of methicillin resistant and sensitive Staphylococcus aureus.</title>
        <authorList>
            <person name="Highlander S.K."/>
            <person name="Hulten K.G."/>
            <person name="Qin X."/>
            <person name="Jiang H."/>
            <person name="Yerrapragada S."/>
            <person name="Mason E.O. Jr."/>
            <person name="Shang Y."/>
            <person name="Williams T.M."/>
            <person name="Fortunov R.M."/>
            <person name="Liu Y."/>
            <person name="Igboeli O."/>
            <person name="Petrosino J."/>
            <person name="Tirumalai M."/>
            <person name="Uzman A."/>
            <person name="Fox G.E."/>
            <person name="Cardenas A.M."/>
            <person name="Muzny D.M."/>
            <person name="Hemphill L."/>
            <person name="Ding Y."/>
            <person name="Dugan S."/>
            <person name="Blyth P.R."/>
            <person name="Buhay C.J."/>
            <person name="Dinh H.H."/>
            <person name="Hawes A.C."/>
            <person name="Holder M."/>
            <person name="Kovar C.L."/>
            <person name="Lee S.L."/>
            <person name="Liu W."/>
            <person name="Nazareth L.V."/>
            <person name="Wang Q."/>
            <person name="Zhou J."/>
            <person name="Kaplan S.L."/>
            <person name="Weinstock G.M."/>
        </authorList>
    </citation>
    <scope>NUCLEOTIDE SEQUENCE [LARGE SCALE GENOMIC DNA]</scope>
    <source>
        <strain>USA300 / TCH1516</strain>
    </source>
</reference>
<feature type="chain" id="PRO_1000086386" description="DNA-directed RNA polymerase subunit beta">
    <location>
        <begin position="1"/>
        <end position="1183"/>
    </location>
</feature>
<dbReference type="EC" id="2.7.7.6" evidence="1"/>
<dbReference type="EMBL" id="CP000730">
    <property type="protein sequence ID" value="ABX28562.1"/>
    <property type="molecule type" value="Genomic_DNA"/>
</dbReference>
<dbReference type="RefSeq" id="WP_000918667.1">
    <property type="nucleotide sequence ID" value="NC_010079.1"/>
</dbReference>
<dbReference type="SMR" id="A8YZP0"/>
<dbReference type="KEGG" id="sax:USA300HOU_0536"/>
<dbReference type="HOGENOM" id="CLU_000524_4_1_9"/>
<dbReference type="GO" id="GO:0000428">
    <property type="term" value="C:DNA-directed RNA polymerase complex"/>
    <property type="evidence" value="ECO:0007669"/>
    <property type="project" value="UniProtKB-KW"/>
</dbReference>
<dbReference type="GO" id="GO:0003677">
    <property type="term" value="F:DNA binding"/>
    <property type="evidence" value="ECO:0007669"/>
    <property type="project" value="UniProtKB-UniRule"/>
</dbReference>
<dbReference type="GO" id="GO:0003899">
    <property type="term" value="F:DNA-directed RNA polymerase activity"/>
    <property type="evidence" value="ECO:0007669"/>
    <property type="project" value="UniProtKB-UniRule"/>
</dbReference>
<dbReference type="GO" id="GO:0032549">
    <property type="term" value="F:ribonucleoside binding"/>
    <property type="evidence" value="ECO:0007669"/>
    <property type="project" value="InterPro"/>
</dbReference>
<dbReference type="GO" id="GO:0006351">
    <property type="term" value="P:DNA-templated transcription"/>
    <property type="evidence" value="ECO:0007669"/>
    <property type="project" value="UniProtKB-UniRule"/>
</dbReference>
<dbReference type="CDD" id="cd00653">
    <property type="entry name" value="RNA_pol_B_RPB2"/>
    <property type="match status" value="1"/>
</dbReference>
<dbReference type="FunFam" id="3.90.1800.10:FF:000001">
    <property type="entry name" value="DNA-directed RNA polymerase subunit beta"/>
    <property type="match status" value="1"/>
</dbReference>
<dbReference type="Gene3D" id="2.40.50.100">
    <property type="match status" value="1"/>
</dbReference>
<dbReference type="Gene3D" id="2.40.50.150">
    <property type="match status" value="1"/>
</dbReference>
<dbReference type="Gene3D" id="3.90.1100.10">
    <property type="match status" value="3"/>
</dbReference>
<dbReference type="Gene3D" id="2.40.270.10">
    <property type="entry name" value="DNA-directed RNA polymerase, subunit 2, domain 6"/>
    <property type="match status" value="1"/>
</dbReference>
<dbReference type="Gene3D" id="3.90.1800.10">
    <property type="entry name" value="RNA polymerase alpha subunit dimerisation domain"/>
    <property type="match status" value="1"/>
</dbReference>
<dbReference type="Gene3D" id="3.90.1110.10">
    <property type="entry name" value="RNA polymerase Rpb2, domain 2"/>
    <property type="match status" value="1"/>
</dbReference>
<dbReference type="HAMAP" id="MF_01321">
    <property type="entry name" value="RNApol_bact_RpoB"/>
    <property type="match status" value="1"/>
</dbReference>
<dbReference type="InterPro" id="IPR019462">
    <property type="entry name" value="DNA-dir_RNA_pol_bsu_external_1"/>
</dbReference>
<dbReference type="InterPro" id="IPR015712">
    <property type="entry name" value="DNA-dir_RNA_pol_su2"/>
</dbReference>
<dbReference type="InterPro" id="IPR007120">
    <property type="entry name" value="DNA-dir_RNAP_su2_dom"/>
</dbReference>
<dbReference type="InterPro" id="IPR037033">
    <property type="entry name" value="DNA-dir_RNAP_su2_hyb_sf"/>
</dbReference>
<dbReference type="InterPro" id="IPR010243">
    <property type="entry name" value="RNA_pol_bsu_bac"/>
</dbReference>
<dbReference type="InterPro" id="IPR007121">
    <property type="entry name" value="RNA_pol_bsu_CS"/>
</dbReference>
<dbReference type="InterPro" id="IPR007644">
    <property type="entry name" value="RNA_pol_bsu_protrusion"/>
</dbReference>
<dbReference type="InterPro" id="IPR007642">
    <property type="entry name" value="RNA_pol_Rpb2_2"/>
</dbReference>
<dbReference type="InterPro" id="IPR037034">
    <property type="entry name" value="RNA_pol_Rpb2_2_sf"/>
</dbReference>
<dbReference type="InterPro" id="IPR007645">
    <property type="entry name" value="RNA_pol_Rpb2_3"/>
</dbReference>
<dbReference type="InterPro" id="IPR007641">
    <property type="entry name" value="RNA_pol_Rpb2_7"/>
</dbReference>
<dbReference type="InterPro" id="IPR014724">
    <property type="entry name" value="RNA_pol_RPB2_OB-fold"/>
</dbReference>
<dbReference type="NCBIfam" id="NF001616">
    <property type="entry name" value="PRK00405.1"/>
    <property type="match status" value="1"/>
</dbReference>
<dbReference type="NCBIfam" id="TIGR02013">
    <property type="entry name" value="rpoB"/>
    <property type="match status" value="1"/>
</dbReference>
<dbReference type="PANTHER" id="PTHR20856">
    <property type="entry name" value="DNA-DIRECTED RNA POLYMERASE I SUBUNIT 2"/>
    <property type="match status" value="1"/>
</dbReference>
<dbReference type="Pfam" id="PF04563">
    <property type="entry name" value="RNA_pol_Rpb2_1"/>
    <property type="match status" value="1"/>
</dbReference>
<dbReference type="Pfam" id="PF04561">
    <property type="entry name" value="RNA_pol_Rpb2_2"/>
    <property type="match status" value="2"/>
</dbReference>
<dbReference type="Pfam" id="PF04565">
    <property type="entry name" value="RNA_pol_Rpb2_3"/>
    <property type="match status" value="1"/>
</dbReference>
<dbReference type="Pfam" id="PF10385">
    <property type="entry name" value="RNA_pol_Rpb2_45"/>
    <property type="match status" value="1"/>
</dbReference>
<dbReference type="Pfam" id="PF00562">
    <property type="entry name" value="RNA_pol_Rpb2_6"/>
    <property type="match status" value="1"/>
</dbReference>
<dbReference type="Pfam" id="PF04560">
    <property type="entry name" value="RNA_pol_Rpb2_7"/>
    <property type="match status" value="1"/>
</dbReference>
<dbReference type="SUPFAM" id="SSF64484">
    <property type="entry name" value="beta and beta-prime subunits of DNA dependent RNA-polymerase"/>
    <property type="match status" value="1"/>
</dbReference>
<dbReference type="PROSITE" id="PS01166">
    <property type="entry name" value="RNA_POL_BETA"/>
    <property type="match status" value="1"/>
</dbReference>
<evidence type="ECO:0000255" key="1">
    <source>
        <dbReference type="HAMAP-Rule" id="MF_01321"/>
    </source>
</evidence>
<organism>
    <name type="scientific">Staphylococcus aureus (strain USA300 / TCH1516)</name>
    <dbReference type="NCBI Taxonomy" id="451516"/>
    <lineage>
        <taxon>Bacteria</taxon>
        <taxon>Bacillati</taxon>
        <taxon>Bacillota</taxon>
        <taxon>Bacilli</taxon>
        <taxon>Bacillales</taxon>
        <taxon>Staphylococcaceae</taxon>
        <taxon>Staphylococcus</taxon>
    </lineage>
</organism>
<protein>
    <recommendedName>
        <fullName evidence="1">DNA-directed RNA polymerase subunit beta</fullName>
        <shortName evidence="1">RNAP subunit beta</shortName>
        <ecNumber evidence="1">2.7.7.6</ecNumber>
    </recommendedName>
    <alternativeName>
        <fullName evidence="1">RNA polymerase subunit beta</fullName>
    </alternativeName>
    <alternativeName>
        <fullName evidence="1">Transcriptase subunit beta</fullName>
    </alternativeName>
</protein>
<keyword id="KW-0240">DNA-directed RNA polymerase</keyword>
<keyword id="KW-0548">Nucleotidyltransferase</keyword>
<keyword id="KW-0804">Transcription</keyword>
<keyword id="KW-0808">Transferase</keyword>
<accession>A8YZP0</accession>
<sequence>MAGQVVQYGRHRKRRNYARISEVLELPNLIEIQTKSYEWFLREGLIEMFRDISPIEDFTGNLSLEFVDYRLGEPKYDLEESKNRDATYAAPLRVKVRLIIKETGEVKEQEVFMGDFPLMTDTGTFVINGAERVIVSQLVRSPSVYFNEKIDKNGRENYDATIIPNRGAWLEYETDAKDVVYVRIDRTRKLPLTVLLRALGFSSDQEIVDLLGDNEYLRNTLEKDGTENTEQALLEIYERLRPGEPPTVENAKSLLYSRFFDPKRYDLASVGRYKTNKKLHLKHRLFNQKLAEPIVNTETGEIVVEEGTVLDRRKIDEIMDVLESNANSEVFELHGSVIDEPVEIQSIKVYVPNDDEGRTTTVIGNAFPDSEVKCITPADIIASMSYFFNLLSGIGYTDDIDHLGNRRLRSVGELLQNQFRIGLSRMERVVRERMSIQDTESITPQQLINIRPVIASIKEFFGSSQLSQFMDQANPLAELTHKRRLSALGPGGLTRERAQMEVRDVHYSHYGRMCPIETPEGPNIGLINSLSSYARVNEFGFIETPYRKVDLDTHAITDQIDYLTADEEDSYVVAQANSKLDENGRFMDDEVVCRFRGNNTVMAKEKMDYMDVSPKQVVSAATACIPFLENDDSNRALMGANMQRQAVPLMNPEAPFVGTGMEHVAARDSGAAITAKHRGRVEHVESNEILVRRLVEENGVEHEGELDRYPLAKFKRSNSGTCYNQRPIVAVGDVVEYNEILADGPSMELGEMALGRNVVVGFMTWDGYNYEDAVIMSERLVKDDVYTSIHIEEYESEARDTKLGPEEITRDIPNVSESALKNLDDRGIVYIGAEVKDGDILVGKVTPKGVTELTAEERLLHAIFGEKAREVRDTSLRVPHGAGGIVLDVKVFNREEGDDTLSPGVNQLVRVYIVQKRKIHVGDKMCGRHGNKGVISKIVPEEDMPYLPDGRPIDIMLNPLGVPSRMNIGQVLELHLGMAAKNLGIHVASPVFDGANDDDVWSTIEEAGMARDGKTVLYDGRTGEPFDNRISVGVMYMLKLAHMVDDKLHARSTGPYSLVTQQPLGGKAQFGGQRFGEMEVWALEAYGAAYTLQEILTYKSDDTVGRVKTYEAIVKGENISRPSVPESFRVLMKELQSLGLDVKVMDEQDNEIEMTDVDDDDVVERKVDLQQNDAPETQKEVTD</sequence>
<comment type="function">
    <text evidence="1">DNA-dependent RNA polymerase catalyzes the transcription of DNA into RNA using the four ribonucleoside triphosphates as substrates.</text>
</comment>
<comment type="catalytic activity">
    <reaction evidence="1">
        <text>RNA(n) + a ribonucleoside 5'-triphosphate = RNA(n+1) + diphosphate</text>
        <dbReference type="Rhea" id="RHEA:21248"/>
        <dbReference type="Rhea" id="RHEA-COMP:14527"/>
        <dbReference type="Rhea" id="RHEA-COMP:17342"/>
        <dbReference type="ChEBI" id="CHEBI:33019"/>
        <dbReference type="ChEBI" id="CHEBI:61557"/>
        <dbReference type="ChEBI" id="CHEBI:140395"/>
        <dbReference type="EC" id="2.7.7.6"/>
    </reaction>
</comment>
<comment type="subunit">
    <text evidence="1">The RNAP catalytic core consists of 2 alpha, 1 beta, 1 beta' and 1 omega subunit. When a sigma factor is associated with the core the holoenzyme is formed, which can initiate transcription.</text>
</comment>
<comment type="similarity">
    <text evidence="1">Belongs to the RNA polymerase beta chain family.</text>
</comment>
<name>RPOB_STAAT</name>
<gene>
    <name evidence="1" type="primary">rpoB</name>
    <name type="ordered locus">USA300HOU_0536</name>
</gene>